<proteinExistence type="inferred from homology"/>
<keyword id="KW-0997">Cell inner membrane</keyword>
<keyword id="KW-1003">Cell membrane</keyword>
<keyword id="KW-0961">Cell wall biogenesis/degradation</keyword>
<keyword id="KW-0445">Lipid transport</keyword>
<keyword id="KW-0472">Membrane</keyword>
<keyword id="KW-1185">Reference proteome</keyword>
<keyword id="KW-0812">Transmembrane</keyword>
<keyword id="KW-1133">Transmembrane helix</keyword>
<keyword id="KW-0813">Transport</keyword>
<dbReference type="EMBL" id="CP000480">
    <property type="protein sequence ID" value="ABK71905.1"/>
    <property type="molecule type" value="Genomic_DNA"/>
</dbReference>
<dbReference type="EMBL" id="CP001663">
    <property type="protein sequence ID" value="AFP36715.1"/>
    <property type="molecule type" value="Genomic_DNA"/>
</dbReference>
<dbReference type="EMBL" id="CP009494">
    <property type="protein sequence ID" value="AIU05520.1"/>
    <property type="molecule type" value="Genomic_DNA"/>
</dbReference>
<dbReference type="RefSeq" id="WP_011726771.1">
    <property type="nucleotide sequence ID" value="NC_008596.1"/>
</dbReference>
<dbReference type="RefSeq" id="YP_884656.1">
    <property type="nucleotide sequence ID" value="NC_008596.1"/>
</dbReference>
<dbReference type="SMR" id="A0QP18"/>
<dbReference type="STRING" id="246196.MSMEG_0241"/>
<dbReference type="PaxDb" id="246196-MSMEI_0234"/>
<dbReference type="GeneID" id="93455164"/>
<dbReference type="KEGG" id="msb:LJ00_01210"/>
<dbReference type="KEGG" id="msg:MSMEI_0234"/>
<dbReference type="KEGG" id="msm:MSMEG_0241"/>
<dbReference type="PATRIC" id="fig|246196.19.peg.237"/>
<dbReference type="eggNOG" id="COG2409">
    <property type="taxonomic scope" value="Bacteria"/>
</dbReference>
<dbReference type="HOGENOM" id="CLU_005108_2_0_11"/>
<dbReference type="OrthoDB" id="7051771at2"/>
<dbReference type="Proteomes" id="UP000000757">
    <property type="component" value="Chromosome"/>
</dbReference>
<dbReference type="Proteomes" id="UP000006158">
    <property type="component" value="Chromosome"/>
</dbReference>
<dbReference type="GO" id="GO:0005886">
    <property type="term" value="C:plasma membrane"/>
    <property type="evidence" value="ECO:0007669"/>
    <property type="project" value="UniProtKB-SubCell"/>
</dbReference>
<dbReference type="GO" id="GO:0071555">
    <property type="term" value="P:cell wall organization"/>
    <property type="evidence" value="ECO:0007669"/>
    <property type="project" value="UniProtKB-KW"/>
</dbReference>
<dbReference type="GO" id="GO:0006869">
    <property type="term" value="P:lipid transport"/>
    <property type="evidence" value="ECO:0007669"/>
    <property type="project" value="UniProtKB-KW"/>
</dbReference>
<dbReference type="Gene3D" id="1.20.1640.10">
    <property type="entry name" value="Multidrug efflux transporter AcrB transmembrane domain"/>
    <property type="match status" value="2"/>
</dbReference>
<dbReference type="InterPro" id="IPR004869">
    <property type="entry name" value="MMPL_dom"/>
</dbReference>
<dbReference type="InterPro" id="IPR050545">
    <property type="entry name" value="Mycobact_MmpL"/>
</dbReference>
<dbReference type="InterPro" id="IPR000731">
    <property type="entry name" value="SSD"/>
</dbReference>
<dbReference type="PANTHER" id="PTHR33406">
    <property type="entry name" value="MEMBRANE PROTEIN MJ1562-RELATED"/>
    <property type="match status" value="1"/>
</dbReference>
<dbReference type="PANTHER" id="PTHR33406:SF13">
    <property type="entry name" value="MEMBRANE PROTEIN YDFJ"/>
    <property type="match status" value="1"/>
</dbReference>
<dbReference type="Pfam" id="PF03176">
    <property type="entry name" value="MMPL"/>
    <property type="match status" value="2"/>
</dbReference>
<dbReference type="SUPFAM" id="SSF82866">
    <property type="entry name" value="Multidrug efflux transporter AcrB transmembrane domain"/>
    <property type="match status" value="2"/>
</dbReference>
<dbReference type="PROSITE" id="PS50156">
    <property type="entry name" value="SSD"/>
    <property type="match status" value="1"/>
</dbReference>
<name>MMPLB_MYCS2</name>
<evidence type="ECO:0000255" key="1"/>
<evidence type="ECO:0000269" key="2">
    <source>
    </source>
</evidence>
<evidence type="ECO:0000303" key="3">
    <source>
    </source>
</evidence>
<evidence type="ECO:0000305" key="4"/>
<evidence type="ECO:0000305" key="5">
    <source>
    </source>
</evidence>
<evidence type="ECO:0000312" key="6">
    <source>
        <dbReference type="EMBL" id="ABK71905.1"/>
    </source>
</evidence>
<evidence type="ECO:0000312" key="7">
    <source>
        <dbReference type="EMBL" id="AFP36715.1"/>
    </source>
</evidence>
<evidence type="ECO:0000312" key="8">
    <source>
        <dbReference type="EMBL" id="AIU05520.1"/>
    </source>
</evidence>
<feature type="chain" id="PRO_0000432885" description="Mycolic acid-containing lipids exporter MmpL11">
    <location>
        <begin position="1"/>
        <end position="954"/>
    </location>
</feature>
<feature type="transmembrane region" description="Helical" evidence="1">
    <location>
        <begin position="11"/>
        <end position="31"/>
    </location>
</feature>
<feature type="transmembrane region" description="Helical" evidence="1">
    <location>
        <begin position="188"/>
        <end position="208"/>
    </location>
</feature>
<feature type="transmembrane region" description="Helical" evidence="1">
    <location>
        <begin position="214"/>
        <end position="234"/>
    </location>
</feature>
<feature type="transmembrane region" description="Helical" evidence="1">
    <location>
        <begin position="235"/>
        <end position="255"/>
    </location>
</feature>
<feature type="transmembrane region" description="Helical" evidence="1">
    <location>
        <begin position="279"/>
        <end position="299"/>
    </location>
</feature>
<feature type="transmembrane region" description="Helical" evidence="1">
    <location>
        <begin position="312"/>
        <end position="334"/>
    </location>
</feature>
<feature type="transmembrane region" description="Helical" evidence="1">
    <location>
        <begin position="373"/>
        <end position="393"/>
    </location>
</feature>
<feature type="transmembrane region" description="Helical" evidence="1">
    <location>
        <begin position="529"/>
        <end position="549"/>
    </location>
</feature>
<feature type="transmembrane region" description="Helical" evidence="1">
    <location>
        <begin position="559"/>
        <end position="579"/>
    </location>
</feature>
<feature type="transmembrane region" description="Helical" evidence="1">
    <location>
        <begin position="597"/>
        <end position="617"/>
    </location>
</feature>
<feature type="transmembrane region" description="Helical" evidence="1">
    <location>
        <begin position="648"/>
        <end position="668"/>
    </location>
</feature>
<feature type="transmembrane region" description="Helical" evidence="1">
    <location>
        <begin position="670"/>
        <end position="690"/>
    </location>
</feature>
<comment type="function">
    <text evidence="2">Contributes to cell wall biosynthesis and biofilm formation. Transports the mycolic acid-containing lipids monomeromycolyl diacylglycerol (MMDAG) and mycolate ester wax (WE) to the bacterial surface.</text>
</comment>
<comment type="subcellular location">
    <subcellularLocation>
        <location evidence="5">Cell inner membrane</location>
        <topology evidence="1">Multi-pass membrane protein</topology>
    </subcellularLocation>
</comment>
<comment type="disruption phenotype">
    <text evidence="2">Mutant has altered cell wall lipid composition, reduced membrane permeability and altered biofilm formation. It accumulates the mycolic acid-containing precursor mycolyl phospholipid (MycPL) and fails to export MMDAG and mycolate ester wax to the bacterial surface. Does not affect trehalose monomycolate (TMM) transport.</text>
</comment>
<organism>
    <name type="scientific">Mycolicibacterium smegmatis (strain ATCC 700084 / mc(2)155)</name>
    <name type="common">Mycobacterium smegmatis</name>
    <dbReference type="NCBI Taxonomy" id="246196"/>
    <lineage>
        <taxon>Bacteria</taxon>
        <taxon>Bacillati</taxon>
        <taxon>Actinomycetota</taxon>
        <taxon>Actinomycetes</taxon>
        <taxon>Mycobacteriales</taxon>
        <taxon>Mycobacteriaceae</taxon>
        <taxon>Mycolicibacterium</taxon>
    </lineage>
</organism>
<reference key="1">
    <citation type="submission" date="2006-10" db="EMBL/GenBank/DDBJ databases">
        <authorList>
            <person name="Fleischmann R.D."/>
            <person name="Dodson R.J."/>
            <person name="Haft D.H."/>
            <person name="Merkel J.S."/>
            <person name="Nelson W.C."/>
            <person name="Fraser C.M."/>
        </authorList>
    </citation>
    <scope>NUCLEOTIDE SEQUENCE [LARGE SCALE GENOMIC DNA]</scope>
    <source>
        <strain>ATCC 700084 / mc(2)155</strain>
    </source>
</reference>
<reference key="2">
    <citation type="journal article" date="2007" name="Genome Biol.">
        <title>Interrupted coding sequences in Mycobacterium smegmatis: authentic mutations or sequencing errors?</title>
        <authorList>
            <person name="Deshayes C."/>
            <person name="Perrodou E."/>
            <person name="Gallien S."/>
            <person name="Euphrasie D."/>
            <person name="Schaeffer C."/>
            <person name="Van-Dorsselaer A."/>
            <person name="Poch O."/>
            <person name="Lecompte O."/>
            <person name="Reyrat J.-M."/>
        </authorList>
    </citation>
    <scope>NUCLEOTIDE SEQUENCE [LARGE SCALE GENOMIC DNA]</scope>
    <source>
        <strain>ATCC 700084 / mc(2)155</strain>
    </source>
</reference>
<reference key="3">
    <citation type="journal article" date="2009" name="Genome Res.">
        <title>Ortho-proteogenomics: multiple proteomes investigation through orthology and a new MS-based protocol.</title>
        <authorList>
            <person name="Gallien S."/>
            <person name="Perrodou E."/>
            <person name="Carapito C."/>
            <person name="Deshayes C."/>
            <person name="Reyrat J.-M."/>
            <person name="Van Dorsselaer A."/>
            <person name="Poch O."/>
            <person name="Schaeffer C."/>
            <person name="Lecompte O."/>
        </authorList>
    </citation>
    <scope>NUCLEOTIDE SEQUENCE [LARGE SCALE GENOMIC DNA]</scope>
    <source>
        <strain>ATCC 700084 / mc(2)155</strain>
    </source>
</reference>
<reference key="4">
    <citation type="journal article" date="2015" name="Genome Announc.">
        <title>Complete genome sequences of a Mycobacterium smegmatis laboratory strain (MC2 155) and isoniazid-resistant (4XR1/R2) mutant strains.</title>
        <authorList>
            <person name="Mohan A."/>
            <person name="Padiadpu J."/>
            <person name="Baloni P."/>
            <person name="Chandra N."/>
        </authorList>
    </citation>
    <scope>NUCLEOTIDE SEQUENCE [LARGE SCALE GENOMIC DNA]</scope>
    <source>
        <strain>ATCC 700084 / mc(2)155</strain>
    </source>
</reference>
<reference key="5">
    <citation type="journal article" date="2013" name="J. Biol. Chem.">
        <title>MmpL11 protein transports mycolic acid-containing lipids to the mycobacterial cell wall and contributes to biofilm formation in Mycobacterium smegmatis.</title>
        <authorList>
            <person name="Pacheco S.A."/>
            <person name="Hsu F.F."/>
            <person name="Powers K.M."/>
            <person name="Purdy G.E."/>
        </authorList>
    </citation>
    <scope>FUNCTION</scope>
    <scope>DISRUPTION PHENOTYPE</scope>
    <source>
        <strain>ATCC 700084 / mc(2)155</strain>
    </source>
</reference>
<gene>
    <name evidence="3" type="primary">mmpL11</name>
    <name evidence="6" type="ordered locus">MSMEG_0241</name>
    <name evidence="7" type="ordered locus">MSMEI_0234</name>
    <name evidence="8" type="ORF">LJ00_01210</name>
</gene>
<sequence length="954" mass="102692">MMRLSSTLRRFRWAVFATWLLLLVPSIYLALNQSSNLTGGGFEVEGSQSLHVQRQLEEHFPDQGASPLALVAAPRADASYEDMNAAVVHLEKLAAEVPSVKIVPNPQQPAPQPDRPYVITLQLDFNNTGAVDVAKQLRQKVGIHGEEPGESQNGKVKFYVIGQGALGAAATQATKHDIAAAEKWNMPIVLIVLLAVFGSLAAAALPLVLGVCTVVVTMGLVYLLSMFTTMSVFVTSTVSMFGIAVAIDYSLFILMRFREELRAGRDQQDAIDAAMATSGLAVALSGLTVIASVTGIYLINTPVLVSMATGAILAVAVAVLTSTTLTPAVLATFGKAAAKRSSYLHWSRRAEAAQSRFWTRWTGAVMRRPWASAIAAAILLLVLAAPAFNMVLGNSMQRQFDPTHEIRGGVNAAADALGPGALGPIRVLVTFPGEGDASSQAATTTIEAVRQQMTKAPSVVSVQPPVVSDDNDSALLSAVLSVDPEDMAAREAIDWMRAELPGVAGQNATIDVGGPTALIKDFDDRVSATQPLVFVFVALIAFVMLLVSIRSVVLAFKGVLMTVLSVAAAYGSLVVVFQWGWLEQLGFPRISSLDSTIPPLVLAMTFGLSMDYEIFLLTRIRERFLQTNSTRDAVAYGVSTSARTITSAALIMIAVFIGFAFAGMPLVAQLGVACAVAIAVDATVVRLVLVPALMAMFDQWNWWLPRWLDKILPEVDFEKPLPKIEVTDLVIIPDNIAALGPSGSDLRTMVRTAARMKTLAPQTISVADPLAFSGCTRPTTRLSTQRAGRPKAHTPGLHPVTMWRGRLSVAVDALQTEADTEQAPVERRGPVETTNVQLPTGDRLQIPTGAETLRLAGYLIMCRNTTKDFEDFARLVDLMDSHTAALVLASMDRYYCGRDPSNRWVATQLVRRLADPQPSDEHDVRMSGPDAAEDWEKVRQRCLSVAVAMLEEAK</sequence>
<accession>A0QP18</accession>
<protein>
    <recommendedName>
        <fullName evidence="4">Mycolic acid-containing lipids exporter MmpL11</fullName>
    </recommendedName>
</protein>